<accession>Q8I6X9</accession>
<accession>Q4EW08</accession>
<evidence type="ECO:0000250" key="1"/>
<evidence type="ECO:0000250" key="2">
    <source>
        <dbReference type="UniProtKB" id="P0DM29"/>
    </source>
</evidence>
<evidence type="ECO:0000250" key="3">
    <source>
        <dbReference type="UniProtKB" id="P59868"/>
    </source>
</evidence>
<evidence type="ECO:0000255" key="4"/>
<evidence type="ECO:0000303" key="5">
    <source>
    </source>
</evidence>
<evidence type="ECO:0000305" key="6"/>
<evidence type="ECO:0000305" key="7">
    <source>
    </source>
</evidence>
<feature type="signal peptide" evidence="4">
    <location>
        <begin position="1"/>
        <end position="18"/>
    </location>
</feature>
<feature type="propeptide" id="PRO_0000271331" evidence="1">
    <location>
        <begin position="19"/>
        <end position="27"/>
    </location>
</feature>
<feature type="chain" id="PRO_5000061335" description="Toxin BmCa-1">
    <location>
        <begin position="28"/>
        <end position="64"/>
    </location>
</feature>
<feature type="disulfide bond" evidence="3">
    <location>
        <begin position="29"/>
        <end position="43"/>
    </location>
</feature>
<feature type="disulfide bond" evidence="3">
    <location>
        <begin position="36"/>
        <end position="49"/>
    </location>
</feature>
<feature type="disulfide bond" evidence="3">
    <location>
        <begin position="42"/>
        <end position="58"/>
    </location>
</feature>
<feature type="sequence conflict" description="In Ref. 2; AAZ16270." evidence="6" ref="2">
    <original>MNTFVVV</original>
    <variation>MKS</variation>
    <location>
        <begin position="1"/>
        <end position="7"/>
    </location>
</feature>
<sequence length="64" mass="7176">MNTFVVVFLLLTAILCHAEHALDETARGCNRLNKKCNSDGDCCRYGERCISTGVNYYCRPDFGP</sequence>
<dbReference type="EMBL" id="AF419253">
    <property type="protein sequence ID" value="AAN32700.2"/>
    <property type="molecule type" value="mRNA"/>
</dbReference>
<dbReference type="EMBL" id="DQ201205">
    <property type="protein sequence ID" value="ABB83686.1"/>
    <property type="molecule type" value="mRNA"/>
</dbReference>
<dbReference type="EMBL" id="DQ206446">
    <property type="protein sequence ID" value="ABB43242.1"/>
    <property type="molecule type" value="Genomic_DNA"/>
</dbReference>
<dbReference type="EMBL" id="DQ272503">
    <property type="protein sequence ID" value="ABB85068.1"/>
    <property type="molecule type" value="Genomic_DNA"/>
</dbReference>
<dbReference type="EMBL" id="DQ120790">
    <property type="protein sequence ID" value="AAZ16270.1"/>
    <property type="molecule type" value="mRNA"/>
</dbReference>
<dbReference type="SMR" id="Q8I6X9"/>
<dbReference type="GO" id="GO:0005576">
    <property type="term" value="C:extracellular region"/>
    <property type="evidence" value="ECO:0007669"/>
    <property type="project" value="UniProtKB-SubCell"/>
</dbReference>
<dbReference type="GO" id="GO:0005246">
    <property type="term" value="F:calcium channel regulator activity"/>
    <property type="evidence" value="ECO:0007669"/>
    <property type="project" value="UniProtKB-KW"/>
</dbReference>
<dbReference type="GO" id="GO:0015459">
    <property type="term" value="F:potassium channel regulator activity"/>
    <property type="evidence" value="ECO:0007669"/>
    <property type="project" value="UniProtKB-KW"/>
</dbReference>
<dbReference type="GO" id="GO:0090729">
    <property type="term" value="F:toxin activity"/>
    <property type="evidence" value="ECO:0007669"/>
    <property type="project" value="UniProtKB-KW"/>
</dbReference>
<protein>
    <recommendedName>
        <fullName>Toxin BmCa-1</fullName>
    </recommendedName>
    <alternativeName>
        <fullName evidence="5">BmKCaTx4</fullName>
    </alternativeName>
    <alternativeName>
        <fullName>Calcium channel toxin BmCa1</fullName>
    </alternativeName>
</protein>
<keyword id="KW-0108">Calcium channel impairing toxin</keyword>
<keyword id="KW-1015">Disulfide bond</keyword>
<keyword id="KW-0872">Ion channel impairing toxin</keyword>
<keyword id="KW-0960">Knottin</keyword>
<keyword id="KW-0632">Potassium channel impairing toxin</keyword>
<keyword id="KW-1219">Ryanodine-sensitive calcium-release channel impairing toxin</keyword>
<keyword id="KW-0964">Secreted</keyword>
<keyword id="KW-0732">Signal</keyword>
<keyword id="KW-0800">Toxin</keyword>
<proteinExistence type="inferred from homology"/>
<reference key="1">
    <citation type="journal article" date="2006" name="Peptides">
        <title>Cloning and characterization of a novel calcium channel toxin-like gene BmCa1 from Chinese scorpion Mesobuthus martensii Karsch.</title>
        <authorList>
            <person name="Cao Z.-J."/>
            <person name="Xie Y."/>
            <person name="Dai C."/>
            <person name="Zhu S.-Y."/>
            <person name="Yin S.-J."/>
            <person name="Wu Y.-L."/>
            <person name="Li W.-X."/>
        </authorList>
    </citation>
    <scope>NUCLEOTIDE SEQUENCE [GENOMIC DNA / MRNA]</scope>
    <source>
        <tissue>Venom gland</tissue>
    </source>
</reference>
<reference key="2">
    <citation type="journal article" date="2006" name="Peptides">
        <title>Molecular dissection of venom from Chinese scorpion Mesobuthus martensii: identification and characterization of four novel disulfide-bridged venom peptides.</title>
        <authorList>
            <person name="Zeng X.-C."/>
            <person name="Luo F."/>
            <person name="Li W.-X."/>
        </authorList>
    </citation>
    <scope>NUCLEOTIDE SEQUENCE [MRNA]</scope>
    <source>
        <tissue>Venom gland</tissue>
    </source>
</reference>
<reference key="3">
    <citation type="journal article" date="2013" name="Nat. Commun.">
        <title>The genome of Mesobuthus martensii reveals a unique adaptation model of arthropods.</title>
        <authorList>
            <person name="Cao Z."/>
            <person name="Yu Y."/>
            <person name="Wu Y."/>
            <person name="Hao P."/>
            <person name="Di Z."/>
            <person name="He Y."/>
            <person name="Chen Z."/>
            <person name="Yang W."/>
            <person name="Shen Z."/>
            <person name="He X."/>
            <person name="Sheng J."/>
            <person name="Xu X."/>
            <person name="Pan B."/>
            <person name="Feng J."/>
            <person name="Yang X."/>
            <person name="Hong W."/>
            <person name="Zhao W."/>
            <person name="Li Z."/>
            <person name="Huang K."/>
            <person name="Li T."/>
            <person name="Kong Y."/>
            <person name="Liu H."/>
            <person name="Jiang D."/>
            <person name="Zhang B."/>
            <person name="Hu J."/>
            <person name="Hu Y."/>
            <person name="Wang B."/>
            <person name="Dai J."/>
            <person name="Yuan B."/>
            <person name="Feng Y."/>
            <person name="Huang W."/>
            <person name="Xing X."/>
            <person name="Zhao G."/>
            <person name="Li X."/>
            <person name="Li Y."/>
            <person name="Li W."/>
        </authorList>
    </citation>
    <scope>NUCLEOTIDE SEQUENCE [LARGE SCALE GENOMIC DNA]</scope>
    <source>
        <tissue>Muscle</tissue>
    </source>
</reference>
<organism>
    <name type="scientific">Olivierus martensii</name>
    <name type="common">Manchurian scorpion</name>
    <name type="synonym">Mesobuthus martensii</name>
    <dbReference type="NCBI Taxonomy" id="34649"/>
    <lineage>
        <taxon>Eukaryota</taxon>
        <taxon>Metazoa</taxon>
        <taxon>Ecdysozoa</taxon>
        <taxon>Arthropoda</taxon>
        <taxon>Chelicerata</taxon>
        <taxon>Arachnida</taxon>
        <taxon>Scorpiones</taxon>
        <taxon>Buthida</taxon>
        <taxon>Buthoidea</taxon>
        <taxon>Buthidae</taxon>
        <taxon>Olivierus</taxon>
    </lineage>
</organism>
<name>CLCA1_OLIMR</name>
<comment type="function">
    <text evidence="2">May increase intracellular calcium release through the activation of nuclear inositol 1,4,5-trisphosphate receptors (ITPR) of cardiomyocytes, thereby causing an increase in the contraction frequency of these cells.</text>
</comment>
<comment type="subcellular location">
    <subcellularLocation>
        <location evidence="7">Secreted</location>
    </subcellularLocation>
</comment>
<comment type="tissue specificity">
    <text evidence="7">Expressed by the venom gland.</text>
</comment>
<comment type="domain">
    <text evidence="3">The presence of a 'disulfide through disulfide knot' structurally defines this protein as a knottin.</text>
</comment>
<comment type="similarity">
    <text evidence="6">Belongs to the scorpion calcin-like family.</text>
</comment>